<sequence length="596" mass="67756">MAVEELQSIIKRCQILEEHDFKEEDFGLFQLAGQRCIEDGYINQLLEIIQDEKNKTIIKSMGWNLVGPVVRCLLRGREEDKREECFLIFDLLVKLCNPKELLLGLLELIEEPSGKQISQIILLLLQPLQTVIQKLPNNKAYSVGLALSTLWSQLSLLPVPHSEEQIQADDYGLCQCCKALIEFTKPFVEEVISDKENKENAKLKDELLKFCFKGLKCPLLTAQFLEQSEDVGNDPFRCFASEIIGFLSKIGHPVPQIILNHGRKKRTWDYLEFEEEEDKQLAESVASLTYLVFVQGIGIDQLPMVLSPSYLLQLNMEHIEVFLQRTEQSIYSKGLELLETSLLRLEDNSLCYQYLEIKSFLAVPQGLVKVMTLCPIETLRKKGLSMLQLFIDKLDSQGKYTLFRCLLNTSNHSGVEAFVIQNIKNQIDLSFKKTYNKWFAGAQLISLLDLVLSLPEGAETDLLQNSDRIMASLNLLRYLVIKDNEDDNQTGLWTELGKIENNFLKPLHIGLNMSKAHYEAEIKNSQQNNQVASMCKGVCSVTVGGEEIPSMPPEMQLKVLHSALFTFDLIESVLARVEELIEIKSKSTSEENVGIK</sequence>
<gene>
    <name type="primary">Glmn</name>
    <name type="synonym">Fap48</name>
</gene>
<protein>
    <recommendedName>
        <fullName>Glomulin</fullName>
    </recommendedName>
    <alternativeName>
        <fullName>FK506-binding protein-associated protein</fullName>
        <shortName>FAP</shortName>
    </alternativeName>
    <alternativeName>
        <fullName>FKBP-associated protein</fullName>
    </alternativeName>
</protein>
<feature type="initiator methionine" description="Removed" evidence="1">
    <location>
        <position position="1"/>
    </location>
</feature>
<feature type="chain" id="PRO_0000087514" description="Glomulin">
    <location>
        <begin position="2"/>
        <end position="596"/>
    </location>
</feature>
<feature type="region of interest" description="Alpha-helical region with structural similarity to HEAT repeats" evidence="1">
    <location>
        <begin position="2"/>
        <end position="555"/>
    </location>
</feature>
<feature type="region of interest" description="Important for interaction with RBX1" evidence="1">
    <location>
        <begin position="299"/>
        <end position="596"/>
    </location>
</feature>
<feature type="modified residue" description="N-acetylalanine" evidence="1">
    <location>
        <position position="2"/>
    </location>
</feature>
<feature type="sequence conflict" description="In Ref. 3; AAH03446." evidence="4" ref="3">
    <original>Y</original>
    <variation>S</variation>
    <location>
        <position position="270"/>
    </location>
</feature>
<keyword id="KW-0007">Acetylation</keyword>
<keyword id="KW-0597">Phosphoprotein</keyword>
<keyword id="KW-1185">Reference proteome</keyword>
<dbReference type="EMBL" id="AJ566083">
    <property type="protein sequence ID" value="CAD92739.1"/>
    <property type="molecule type" value="mRNA"/>
</dbReference>
<dbReference type="EMBL" id="AK034160">
    <property type="protein sequence ID" value="BAC28612.1"/>
    <property type="molecule type" value="mRNA"/>
</dbReference>
<dbReference type="EMBL" id="AK169045">
    <property type="protein sequence ID" value="BAE40833.1"/>
    <property type="molecule type" value="mRNA"/>
</dbReference>
<dbReference type="EMBL" id="BC003446">
    <property type="protein sequence ID" value="AAH03446.1"/>
    <property type="molecule type" value="mRNA"/>
</dbReference>
<dbReference type="CCDS" id="CCDS19505.1"/>
<dbReference type="RefSeq" id="NP_001155210.1">
    <property type="nucleotide sequence ID" value="NM_001161738.1"/>
</dbReference>
<dbReference type="RefSeq" id="NP_001155211.1">
    <property type="nucleotide sequence ID" value="NM_001161739.1"/>
</dbReference>
<dbReference type="RefSeq" id="NP_573511.2">
    <property type="nucleotide sequence ID" value="NM_133248.2"/>
</dbReference>
<dbReference type="RefSeq" id="XP_006534863.1">
    <property type="nucleotide sequence ID" value="XM_006534800.5"/>
</dbReference>
<dbReference type="SMR" id="Q8BZM1"/>
<dbReference type="BioGRID" id="228459">
    <property type="interactions" value="2"/>
</dbReference>
<dbReference type="FunCoup" id="Q8BZM1">
    <property type="interactions" value="1178"/>
</dbReference>
<dbReference type="STRING" id="10090.ENSMUSP00000077168"/>
<dbReference type="PhosphoSitePlus" id="Q8BZM1"/>
<dbReference type="jPOST" id="Q8BZM1"/>
<dbReference type="PaxDb" id="10090-ENSMUSP00000077168"/>
<dbReference type="ProteomicsDB" id="270994"/>
<dbReference type="Pumba" id="Q8BZM1"/>
<dbReference type="Antibodypedia" id="33642">
    <property type="antibodies" value="249 antibodies from 27 providers"/>
</dbReference>
<dbReference type="DNASU" id="170823"/>
<dbReference type="Ensembl" id="ENSMUST00000078021.13">
    <property type="protein sequence ID" value="ENSMUSP00000077168.7"/>
    <property type="gene ID" value="ENSMUSG00000029276.14"/>
</dbReference>
<dbReference type="Ensembl" id="ENSMUST00000082121.9">
    <property type="protein sequence ID" value="ENSMUSP00000080766.3"/>
    <property type="gene ID" value="ENSMUSG00000029276.14"/>
</dbReference>
<dbReference type="GeneID" id="170823"/>
<dbReference type="KEGG" id="mmu:170823"/>
<dbReference type="UCSC" id="uc008ymm.2">
    <property type="organism name" value="mouse"/>
</dbReference>
<dbReference type="AGR" id="MGI:2141180"/>
<dbReference type="CTD" id="11146"/>
<dbReference type="MGI" id="MGI:2141180">
    <property type="gene designation" value="Glmn"/>
</dbReference>
<dbReference type="VEuPathDB" id="HostDB:ENSMUSG00000029276"/>
<dbReference type="eggNOG" id="ENOG502QQAV">
    <property type="taxonomic scope" value="Eukaryota"/>
</dbReference>
<dbReference type="GeneTree" id="ENSGT00390000018446"/>
<dbReference type="HOGENOM" id="CLU_029654_3_0_1"/>
<dbReference type="InParanoid" id="Q8BZM1"/>
<dbReference type="OMA" id="TLCPMEH"/>
<dbReference type="OrthoDB" id="619536at2759"/>
<dbReference type="PhylomeDB" id="Q8BZM1"/>
<dbReference type="TreeFam" id="TF105319"/>
<dbReference type="Reactome" id="R-MMU-983168">
    <property type="pathway name" value="Antigen processing: Ubiquitination &amp; Proteasome degradation"/>
</dbReference>
<dbReference type="BioGRID-ORCS" id="170823">
    <property type="hits" value="13 hits in 77 CRISPR screens"/>
</dbReference>
<dbReference type="ChiTaRS" id="Glmn">
    <property type="organism name" value="mouse"/>
</dbReference>
<dbReference type="PRO" id="PR:Q8BZM1"/>
<dbReference type="Proteomes" id="UP000000589">
    <property type="component" value="Chromosome 5"/>
</dbReference>
<dbReference type="RNAct" id="Q8BZM1">
    <property type="molecule type" value="protein"/>
</dbReference>
<dbReference type="Bgee" id="ENSMUSG00000029276">
    <property type="expression patterns" value="Expressed in retinal neural layer and 249 other cell types or tissues"/>
</dbReference>
<dbReference type="ExpressionAtlas" id="Q8BZM1">
    <property type="expression patterns" value="baseline and differential"/>
</dbReference>
<dbReference type="GO" id="GO:0031462">
    <property type="term" value="C:Cul2-RING ubiquitin ligase complex"/>
    <property type="evidence" value="ECO:0000266"/>
    <property type="project" value="MGI"/>
</dbReference>
<dbReference type="GO" id="GO:0031463">
    <property type="term" value="C:Cul3-RING ubiquitin ligase complex"/>
    <property type="evidence" value="ECO:0000266"/>
    <property type="project" value="MGI"/>
</dbReference>
<dbReference type="GO" id="GO:0031464">
    <property type="term" value="C:Cul4A-RING E3 ubiquitin ligase complex"/>
    <property type="evidence" value="ECO:0000266"/>
    <property type="project" value="MGI"/>
</dbReference>
<dbReference type="GO" id="GO:0031461">
    <property type="term" value="C:cullin-RING ubiquitin ligase complex"/>
    <property type="evidence" value="ECO:0000266"/>
    <property type="project" value="MGI"/>
</dbReference>
<dbReference type="GO" id="GO:0005171">
    <property type="term" value="F:hepatocyte growth factor receptor binding"/>
    <property type="evidence" value="ECO:0000250"/>
    <property type="project" value="UniProtKB"/>
</dbReference>
<dbReference type="GO" id="GO:0005102">
    <property type="term" value="F:signaling receptor binding"/>
    <property type="evidence" value="ECO:0000266"/>
    <property type="project" value="MGI"/>
</dbReference>
<dbReference type="GO" id="GO:0031625">
    <property type="term" value="F:ubiquitin protein ligase binding"/>
    <property type="evidence" value="ECO:0000266"/>
    <property type="project" value="MGI"/>
</dbReference>
<dbReference type="GO" id="GO:0055105">
    <property type="term" value="F:ubiquitin-protein transferase inhibitor activity"/>
    <property type="evidence" value="ECO:0000266"/>
    <property type="project" value="MGI"/>
</dbReference>
<dbReference type="GO" id="GO:0007166">
    <property type="term" value="P:cell surface receptor signaling pathway"/>
    <property type="evidence" value="ECO:0000266"/>
    <property type="project" value="MGI"/>
</dbReference>
<dbReference type="GO" id="GO:0072359">
    <property type="term" value="P:circulatory system development"/>
    <property type="evidence" value="ECO:0000315"/>
    <property type="project" value="MGI"/>
</dbReference>
<dbReference type="GO" id="GO:0040029">
    <property type="term" value="P:epigenetic regulation of gene expression"/>
    <property type="evidence" value="ECO:0000250"/>
    <property type="project" value="UniProtKB"/>
</dbReference>
<dbReference type="GO" id="GO:0042692">
    <property type="term" value="P:muscle cell differentiation"/>
    <property type="evidence" value="ECO:0000250"/>
    <property type="project" value="UniProtKB"/>
</dbReference>
<dbReference type="GO" id="GO:0008285">
    <property type="term" value="P:negative regulation of cell population proliferation"/>
    <property type="evidence" value="ECO:0000266"/>
    <property type="project" value="MGI"/>
</dbReference>
<dbReference type="GO" id="GO:0042130">
    <property type="term" value="P:negative regulation of T cell proliferation"/>
    <property type="evidence" value="ECO:0000250"/>
    <property type="project" value="UniProtKB"/>
</dbReference>
<dbReference type="GO" id="GO:0001843">
    <property type="term" value="P:neural tube closure"/>
    <property type="evidence" value="ECO:0000315"/>
    <property type="project" value="MGI"/>
</dbReference>
<dbReference type="GO" id="GO:0001819">
    <property type="term" value="P:positive regulation of cytokine production"/>
    <property type="evidence" value="ECO:0000250"/>
    <property type="project" value="UniProtKB"/>
</dbReference>
<dbReference type="GO" id="GO:0032743">
    <property type="term" value="P:positive regulation of interleukin-2 production"/>
    <property type="evidence" value="ECO:0000250"/>
    <property type="project" value="UniProtKB"/>
</dbReference>
<dbReference type="GO" id="GO:0042327">
    <property type="term" value="P:positive regulation of phosphorylation"/>
    <property type="evidence" value="ECO:0000250"/>
    <property type="project" value="UniProtKB"/>
</dbReference>
<dbReference type="GO" id="GO:0032434">
    <property type="term" value="P:regulation of proteasomal ubiquitin-dependent protein catabolic process"/>
    <property type="evidence" value="ECO:0000266"/>
    <property type="project" value="MGI"/>
</dbReference>
<dbReference type="GO" id="GO:0001570">
    <property type="term" value="P:vasculogenesis"/>
    <property type="evidence" value="ECO:0000250"/>
    <property type="project" value="UniProtKB"/>
</dbReference>
<dbReference type="InterPro" id="IPR019516">
    <property type="entry name" value="Glomulin/ALF4"/>
</dbReference>
<dbReference type="InterPro" id="IPR013877">
    <property type="entry name" value="YAP-bd/ALF4/Glomulin"/>
</dbReference>
<dbReference type="PANTHER" id="PTHR15430">
    <property type="entry name" value="GLOMULIN"/>
    <property type="match status" value="1"/>
</dbReference>
<dbReference type="PANTHER" id="PTHR15430:SF1">
    <property type="entry name" value="GLOMULIN"/>
    <property type="match status" value="1"/>
</dbReference>
<dbReference type="Pfam" id="PF08568">
    <property type="entry name" value="Kinetochor_Ybp2"/>
    <property type="match status" value="1"/>
</dbReference>
<evidence type="ECO:0000250" key="1">
    <source>
        <dbReference type="UniProtKB" id="Q92990"/>
    </source>
</evidence>
<evidence type="ECO:0000269" key="2">
    <source>
    </source>
</evidence>
<evidence type="ECO:0000269" key="3">
    <source>
    </source>
</evidence>
<evidence type="ECO:0000305" key="4"/>
<name>GLMN_MOUSE</name>
<comment type="function">
    <text evidence="1 3">Regulatory component of cullin-RING-based SCF (SKP1-Cullin-F-box protein) E3 ubiquitin-protein ligase complexes. Inhibits E3 ubiquitin ligase activity by binding to the RING domain of RBX1 and inhibiting its interaction with the E2 ubiquitin-conjugating enzyme CDC34. Inhibits RBX1-mediated neddylation of CUL1 (By similarity). Required for normal stability and normal cellular levels of key components of SCF ubiquitin ligase complexes, including FBXW7, RBX1, CUL1, CUL2, CUL3, CUL4A, and thereby contributes to the regulation of CCNE1 and MYC levels (PubMed:22405651). Essential for normal development of the vasculature (PubMed:22405651). Contributes to the regulation of RPS6KB1 phosphorylation (By similarity).</text>
</comment>
<comment type="subunit">
    <text evidence="1">Interacts with FKBP4 and FKBP1A. Interacts with RBX1 (via RING domain). Identified in complexes that contain RBX1 plus one of the cullins CUL1, CUL2, CUL3, and CUL4A. Identified in a SCF complex composed of CUL1, RBX1, SKP1, FBXW7 and GLMN. Component of a SCF-like complex consisting of CUL7, RBX1, SKP1, FBXW8 and GLMN. Interacts with unphosphorylated MET and is released upon MET phosphorylation.</text>
</comment>
<comment type="tissue specificity">
    <text evidence="2">Ubiquitous. Detected in embryonic vasculature and embryonic perichondrium, and in adult eye, brain, heart, testis, kidney, smooth muscle and skeletal muscle.</text>
</comment>
<comment type="domain">
    <text evidence="1">The C-terminal half of the protein is important for interaction with RBX1.</text>
</comment>
<comment type="PTM">
    <text evidence="1">Phosphorylated on tyrosine residues.</text>
</comment>
<comment type="disruption phenotype">
    <text evidence="3">Complete embryonic lethality. Embryos are present at the expected Mendelian rate at 10.5 dpc, but all are dead by 12.5 dpc. Mutant embryos display decreased growth, delayed neural tube closure, incomplete axial turning, pericardial effusion and a failure to form an organized, functional vascular network. Mutant embryos have reduced protein levels of FBXW7, RBX1, CUL1, CUL2, CUL3 and CUL4A, due to increased proteasome-mediated degradation, and increased levels of CCNE1 and MYC.</text>
</comment>
<accession>Q8BZM1</accession>
<accession>Q3TFR5</accession>
<accession>Q99LB8</accession>
<organism>
    <name type="scientific">Mus musculus</name>
    <name type="common">Mouse</name>
    <dbReference type="NCBI Taxonomy" id="10090"/>
    <lineage>
        <taxon>Eukaryota</taxon>
        <taxon>Metazoa</taxon>
        <taxon>Chordata</taxon>
        <taxon>Craniata</taxon>
        <taxon>Vertebrata</taxon>
        <taxon>Euteleostomi</taxon>
        <taxon>Mammalia</taxon>
        <taxon>Eutheria</taxon>
        <taxon>Euarchontoglires</taxon>
        <taxon>Glires</taxon>
        <taxon>Rodentia</taxon>
        <taxon>Myomorpha</taxon>
        <taxon>Muroidea</taxon>
        <taxon>Muridae</taxon>
        <taxon>Murinae</taxon>
        <taxon>Mus</taxon>
        <taxon>Mus</taxon>
    </lineage>
</organism>
<reference key="1">
    <citation type="journal article" date="2004" name="Gene Expr. Patterns">
        <title>Glomulin is predominantly expressed in vascular smooth muscle cells in the embryonic and adult mouse.</title>
        <authorList>
            <person name="McIntyre B.A.S."/>
            <person name="Brouillard P."/>
            <person name="Aerts V."/>
            <person name="Gutierrez-Roelens I."/>
            <person name="Vikkula M."/>
        </authorList>
    </citation>
    <scope>NUCLEOTIDE SEQUENCE [MRNA]</scope>
    <scope>TISSUE SPECIFICITY</scope>
    <source>
        <strain>CD-1</strain>
        <tissue>Embryo</tissue>
    </source>
</reference>
<reference key="2">
    <citation type="journal article" date="2005" name="Science">
        <title>The transcriptional landscape of the mammalian genome.</title>
        <authorList>
            <person name="Carninci P."/>
            <person name="Kasukawa T."/>
            <person name="Katayama S."/>
            <person name="Gough J."/>
            <person name="Frith M.C."/>
            <person name="Maeda N."/>
            <person name="Oyama R."/>
            <person name="Ravasi T."/>
            <person name="Lenhard B."/>
            <person name="Wells C."/>
            <person name="Kodzius R."/>
            <person name="Shimokawa K."/>
            <person name="Bajic V.B."/>
            <person name="Brenner S.E."/>
            <person name="Batalov S."/>
            <person name="Forrest A.R."/>
            <person name="Zavolan M."/>
            <person name="Davis M.J."/>
            <person name="Wilming L.G."/>
            <person name="Aidinis V."/>
            <person name="Allen J.E."/>
            <person name="Ambesi-Impiombato A."/>
            <person name="Apweiler R."/>
            <person name="Aturaliya R.N."/>
            <person name="Bailey T.L."/>
            <person name="Bansal M."/>
            <person name="Baxter L."/>
            <person name="Beisel K.W."/>
            <person name="Bersano T."/>
            <person name="Bono H."/>
            <person name="Chalk A.M."/>
            <person name="Chiu K.P."/>
            <person name="Choudhary V."/>
            <person name="Christoffels A."/>
            <person name="Clutterbuck D.R."/>
            <person name="Crowe M.L."/>
            <person name="Dalla E."/>
            <person name="Dalrymple B.P."/>
            <person name="de Bono B."/>
            <person name="Della Gatta G."/>
            <person name="di Bernardo D."/>
            <person name="Down T."/>
            <person name="Engstrom P."/>
            <person name="Fagiolini M."/>
            <person name="Faulkner G."/>
            <person name="Fletcher C.F."/>
            <person name="Fukushima T."/>
            <person name="Furuno M."/>
            <person name="Futaki S."/>
            <person name="Gariboldi M."/>
            <person name="Georgii-Hemming P."/>
            <person name="Gingeras T.R."/>
            <person name="Gojobori T."/>
            <person name="Green R.E."/>
            <person name="Gustincich S."/>
            <person name="Harbers M."/>
            <person name="Hayashi Y."/>
            <person name="Hensch T.K."/>
            <person name="Hirokawa N."/>
            <person name="Hill D."/>
            <person name="Huminiecki L."/>
            <person name="Iacono M."/>
            <person name="Ikeo K."/>
            <person name="Iwama A."/>
            <person name="Ishikawa T."/>
            <person name="Jakt M."/>
            <person name="Kanapin A."/>
            <person name="Katoh M."/>
            <person name="Kawasawa Y."/>
            <person name="Kelso J."/>
            <person name="Kitamura H."/>
            <person name="Kitano H."/>
            <person name="Kollias G."/>
            <person name="Krishnan S.P."/>
            <person name="Kruger A."/>
            <person name="Kummerfeld S.K."/>
            <person name="Kurochkin I.V."/>
            <person name="Lareau L.F."/>
            <person name="Lazarevic D."/>
            <person name="Lipovich L."/>
            <person name="Liu J."/>
            <person name="Liuni S."/>
            <person name="McWilliam S."/>
            <person name="Madan Babu M."/>
            <person name="Madera M."/>
            <person name="Marchionni L."/>
            <person name="Matsuda H."/>
            <person name="Matsuzawa S."/>
            <person name="Miki H."/>
            <person name="Mignone F."/>
            <person name="Miyake S."/>
            <person name="Morris K."/>
            <person name="Mottagui-Tabar S."/>
            <person name="Mulder N."/>
            <person name="Nakano N."/>
            <person name="Nakauchi H."/>
            <person name="Ng P."/>
            <person name="Nilsson R."/>
            <person name="Nishiguchi S."/>
            <person name="Nishikawa S."/>
            <person name="Nori F."/>
            <person name="Ohara O."/>
            <person name="Okazaki Y."/>
            <person name="Orlando V."/>
            <person name="Pang K.C."/>
            <person name="Pavan W.J."/>
            <person name="Pavesi G."/>
            <person name="Pesole G."/>
            <person name="Petrovsky N."/>
            <person name="Piazza S."/>
            <person name="Reed J."/>
            <person name="Reid J.F."/>
            <person name="Ring B.Z."/>
            <person name="Ringwald M."/>
            <person name="Rost B."/>
            <person name="Ruan Y."/>
            <person name="Salzberg S.L."/>
            <person name="Sandelin A."/>
            <person name="Schneider C."/>
            <person name="Schoenbach C."/>
            <person name="Sekiguchi K."/>
            <person name="Semple C.A."/>
            <person name="Seno S."/>
            <person name="Sessa L."/>
            <person name="Sheng Y."/>
            <person name="Shibata Y."/>
            <person name="Shimada H."/>
            <person name="Shimada K."/>
            <person name="Silva D."/>
            <person name="Sinclair B."/>
            <person name="Sperling S."/>
            <person name="Stupka E."/>
            <person name="Sugiura K."/>
            <person name="Sultana R."/>
            <person name="Takenaka Y."/>
            <person name="Taki K."/>
            <person name="Tammoja K."/>
            <person name="Tan S.L."/>
            <person name="Tang S."/>
            <person name="Taylor M.S."/>
            <person name="Tegner J."/>
            <person name="Teichmann S.A."/>
            <person name="Ueda H.R."/>
            <person name="van Nimwegen E."/>
            <person name="Verardo R."/>
            <person name="Wei C.L."/>
            <person name="Yagi K."/>
            <person name="Yamanishi H."/>
            <person name="Zabarovsky E."/>
            <person name="Zhu S."/>
            <person name="Zimmer A."/>
            <person name="Hide W."/>
            <person name="Bult C."/>
            <person name="Grimmond S.M."/>
            <person name="Teasdale R.D."/>
            <person name="Liu E.T."/>
            <person name="Brusic V."/>
            <person name="Quackenbush J."/>
            <person name="Wahlestedt C."/>
            <person name="Mattick J.S."/>
            <person name="Hume D.A."/>
            <person name="Kai C."/>
            <person name="Sasaki D."/>
            <person name="Tomaru Y."/>
            <person name="Fukuda S."/>
            <person name="Kanamori-Katayama M."/>
            <person name="Suzuki M."/>
            <person name="Aoki J."/>
            <person name="Arakawa T."/>
            <person name="Iida J."/>
            <person name="Imamura K."/>
            <person name="Itoh M."/>
            <person name="Kato T."/>
            <person name="Kawaji H."/>
            <person name="Kawagashira N."/>
            <person name="Kawashima T."/>
            <person name="Kojima M."/>
            <person name="Kondo S."/>
            <person name="Konno H."/>
            <person name="Nakano K."/>
            <person name="Ninomiya N."/>
            <person name="Nishio T."/>
            <person name="Okada M."/>
            <person name="Plessy C."/>
            <person name="Shibata K."/>
            <person name="Shiraki T."/>
            <person name="Suzuki S."/>
            <person name="Tagami M."/>
            <person name="Waki K."/>
            <person name="Watahiki A."/>
            <person name="Okamura-Oho Y."/>
            <person name="Suzuki H."/>
            <person name="Kawai J."/>
            <person name="Hayashizaki Y."/>
        </authorList>
    </citation>
    <scope>NUCLEOTIDE SEQUENCE [LARGE SCALE MRNA]</scope>
    <source>
        <strain>C57BL/6J</strain>
        <tissue>Diencephalon</tissue>
        <tissue>Kidney</tissue>
    </source>
</reference>
<reference key="3">
    <citation type="journal article" date="2004" name="Genome Res.">
        <title>The status, quality, and expansion of the NIH full-length cDNA project: the Mammalian Gene Collection (MGC).</title>
        <authorList>
            <consortium name="The MGC Project Team"/>
        </authorList>
    </citation>
    <scope>NUCLEOTIDE SEQUENCE [LARGE SCALE MRNA]</scope>
</reference>
<reference key="4">
    <citation type="journal article" date="2010" name="Cell">
        <title>A tissue-specific atlas of mouse protein phosphorylation and expression.</title>
        <authorList>
            <person name="Huttlin E.L."/>
            <person name="Jedrychowski M.P."/>
            <person name="Elias J.E."/>
            <person name="Goswami T."/>
            <person name="Rad R."/>
            <person name="Beausoleil S.A."/>
            <person name="Villen J."/>
            <person name="Haas W."/>
            <person name="Sowa M.E."/>
            <person name="Gygi S.P."/>
        </authorList>
    </citation>
    <scope>IDENTIFICATION BY MASS SPECTROMETRY [LARGE SCALE ANALYSIS]</scope>
    <source>
        <tissue>Spleen</tissue>
        <tissue>Testis</tissue>
    </source>
</reference>
<reference key="5">
    <citation type="journal article" date="2012" name="Mol. Cell">
        <title>The glomuvenous malformation protein Glomulin binds Rbx1 and regulates cullin RING ligase-mediated turnover of Fbw7.</title>
        <authorList>
            <person name="Tron A.E."/>
            <person name="Arai T."/>
            <person name="Duda D.M."/>
            <person name="Kuwabara H."/>
            <person name="Olszewski J.L."/>
            <person name="Fujiwara Y."/>
            <person name="Bahamon B.N."/>
            <person name="Signoretti S."/>
            <person name="Schulman B.A."/>
            <person name="DeCaprio J.A."/>
        </authorList>
    </citation>
    <scope>DISRUPTION PHENOTYPE</scope>
</reference>
<proteinExistence type="evidence at protein level"/>